<reference key="1">
    <citation type="journal article" date="2007" name="ISME J.">
        <title>Population level functional diversity in a microbial community revealed by comparative genomic and metagenomic analyses.</title>
        <authorList>
            <person name="Bhaya D."/>
            <person name="Grossman A.R."/>
            <person name="Steunou A.-S."/>
            <person name="Khuri N."/>
            <person name="Cohan F.M."/>
            <person name="Hamamura N."/>
            <person name="Melendrez M.C."/>
            <person name="Bateson M.M."/>
            <person name="Ward D.M."/>
            <person name="Heidelberg J.F."/>
        </authorList>
    </citation>
    <scope>NUCLEOTIDE SEQUENCE [LARGE SCALE GENOMIC DNA]</scope>
    <source>
        <strain>JA-2-3B'a(2-13)</strain>
    </source>
</reference>
<proteinExistence type="inferred from homology"/>
<name>HIS4_SYNJB</name>
<protein>
    <recommendedName>
        <fullName evidence="1">1-(5-phosphoribosyl)-5-[(5-phosphoribosylamino)methylideneamino] imidazole-4-carboxamide isomerase</fullName>
        <ecNumber evidence="1">5.3.1.16</ecNumber>
    </recommendedName>
    <alternativeName>
        <fullName evidence="1">Phosphoribosylformimino-5-aminoimidazole carboxamide ribotide isomerase</fullName>
    </alternativeName>
</protein>
<organism>
    <name type="scientific">Synechococcus sp. (strain JA-2-3B'a(2-13))</name>
    <name type="common">Cyanobacteria bacterium Yellowstone B-Prime</name>
    <dbReference type="NCBI Taxonomy" id="321332"/>
    <lineage>
        <taxon>Bacteria</taxon>
        <taxon>Bacillati</taxon>
        <taxon>Cyanobacteriota</taxon>
        <taxon>Cyanophyceae</taxon>
        <taxon>Synechococcales</taxon>
        <taxon>Synechococcaceae</taxon>
        <taxon>Synechococcus</taxon>
    </lineage>
</organism>
<sequence>MPYTSAFLEVIPAIDLLQGRAVRLYQGDYAQAEQVADDPIQQAEAWAAQGAPRLHVVDLDGAKSGDPVNLPIIERIVRSLAIPVQVGGGIRSLERARQLLDLGVDRVIVGTLAVEDPDTLEAMTQAFPGRVWVGIDARQGQVATRGWLSTTPLRAPELVQRVQAQGAAGIIYTDISRDGTLAGPNLEQLRQILAVSQVPVIASGGIGSLTDLLALLSLPRLTGAILGKALYSGAISLQEALRAVGPGRWQDLPPETGSLWA</sequence>
<gene>
    <name evidence="1" type="primary">hisA</name>
    <name type="ordered locus">CYB_1964</name>
</gene>
<feature type="chain" id="PRO_0000290554" description="1-(5-phosphoribosyl)-5-[(5-phosphoribosylamino)methylideneamino] imidazole-4-carboxamide isomerase">
    <location>
        <begin position="1"/>
        <end position="261"/>
    </location>
</feature>
<feature type="active site" description="Proton acceptor" evidence="1">
    <location>
        <position position="15"/>
    </location>
</feature>
<feature type="active site" description="Proton donor" evidence="1">
    <location>
        <position position="136"/>
    </location>
</feature>
<accession>Q2JK82</accession>
<keyword id="KW-0028">Amino-acid biosynthesis</keyword>
<keyword id="KW-0963">Cytoplasm</keyword>
<keyword id="KW-0368">Histidine biosynthesis</keyword>
<keyword id="KW-0413">Isomerase</keyword>
<keyword id="KW-1185">Reference proteome</keyword>
<comment type="catalytic activity">
    <reaction evidence="1">
        <text>1-(5-phospho-beta-D-ribosyl)-5-[(5-phospho-beta-D-ribosylamino)methylideneamino]imidazole-4-carboxamide = 5-[(5-phospho-1-deoxy-D-ribulos-1-ylimino)methylamino]-1-(5-phospho-beta-D-ribosyl)imidazole-4-carboxamide</text>
        <dbReference type="Rhea" id="RHEA:15469"/>
        <dbReference type="ChEBI" id="CHEBI:58435"/>
        <dbReference type="ChEBI" id="CHEBI:58525"/>
        <dbReference type="EC" id="5.3.1.16"/>
    </reaction>
</comment>
<comment type="pathway">
    <text evidence="1">Amino-acid biosynthesis; L-histidine biosynthesis; L-histidine from 5-phospho-alpha-D-ribose 1-diphosphate: step 4/9.</text>
</comment>
<comment type="subcellular location">
    <subcellularLocation>
        <location evidence="1">Cytoplasm</location>
    </subcellularLocation>
</comment>
<comment type="similarity">
    <text evidence="1">Belongs to the HisA/HisF family.</text>
</comment>
<evidence type="ECO:0000255" key="1">
    <source>
        <dbReference type="HAMAP-Rule" id="MF_01014"/>
    </source>
</evidence>
<dbReference type="EC" id="5.3.1.16" evidence="1"/>
<dbReference type="EMBL" id="CP000240">
    <property type="protein sequence ID" value="ABD02913.1"/>
    <property type="molecule type" value="Genomic_DNA"/>
</dbReference>
<dbReference type="RefSeq" id="WP_011433552.1">
    <property type="nucleotide sequence ID" value="NC_007776.1"/>
</dbReference>
<dbReference type="SMR" id="Q2JK82"/>
<dbReference type="STRING" id="321332.CYB_1964"/>
<dbReference type="KEGG" id="cyb:CYB_1964"/>
<dbReference type="eggNOG" id="COG0106">
    <property type="taxonomic scope" value="Bacteria"/>
</dbReference>
<dbReference type="HOGENOM" id="CLU_048577_1_1_3"/>
<dbReference type="OrthoDB" id="9807749at2"/>
<dbReference type="UniPathway" id="UPA00031">
    <property type="reaction ID" value="UER00009"/>
</dbReference>
<dbReference type="Proteomes" id="UP000001938">
    <property type="component" value="Chromosome"/>
</dbReference>
<dbReference type="GO" id="GO:0005737">
    <property type="term" value="C:cytoplasm"/>
    <property type="evidence" value="ECO:0007669"/>
    <property type="project" value="UniProtKB-SubCell"/>
</dbReference>
<dbReference type="GO" id="GO:0003949">
    <property type="term" value="F:1-(5-phosphoribosyl)-5-[(5-phosphoribosylamino)methylideneamino]imidazole-4-carboxamide isomerase activity"/>
    <property type="evidence" value="ECO:0007669"/>
    <property type="project" value="UniProtKB-UniRule"/>
</dbReference>
<dbReference type="GO" id="GO:0000105">
    <property type="term" value="P:L-histidine biosynthetic process"/>
    <property type="evidence" value="ECO:0007669"/>
    <property type="project" value="UniProtKB-UniRule"/>
</dbReference>
<dbReference type="GO" id="GO:0000162">
    <property type="term" value="P:L-tryptophan biosynthetic process"/>
    <property type="evidence" value="ECO:0007669"/>
    <property type="project" value="TreeGrafter"/>
</dbReference>
<dbReference type="CDD" id="cd04732">
    <property type="entry name" value="HisA"/>
    <property type="match status" value="1"/>
</dbReference>
<dbReference type="FunFam" id="3.20.20.70:FF:000009">
    <property type="entry name" value="1-(5-phosphoribosyl)-5-[(5-phosphoribosylamino)methylideneamino] imidazole-4-carboxamide isomerase"/>
    <property type="match status" value="1"/>
</dbReference>
<dbReference type="Gene3D" id="3.20.20.70">
    <property type="entry name" value="Aldolase class I"/>
    <property type="match status" value="1"/>
</dbReference>
<dbReference type="HAMAP" id="MF_01014">
    <property type="entry name" value="HisA"/>
    <property type="match status" value="1"/>
</dbReference>
<dbReference type="InterPro" id="IPR013785">
    <property type="entry name" value="Aldolase_TIM"/>
</dbReference>
<dbReference type="InterPro" id="IPR006062">
    <property type="entry name" value="His_biosynth"/>
</dbReference>
<dbReference type="InterPro" id="IPR006063">
    <property type="entry name" value="HisA_bact_arch"/>
</dbReference>
<dbReference type="InterPro" id="IPR044524">
    <property type="entry name" value="Isoase_HisA-like"/>
</dbReference>
<dbReference type="InterPro" id="IPR023016">
    <property type="entry name" value="Isoase_HisA-like_bact"/>
</dbReference>
<dbReference type="InterPro" id="IPR011060">
    <property type="entry name" value="RibuloseP-bd_barrel"/>
</dbReference>
<dbReference type="NCBIfam" id="TIGR00007">
    <property type="entry name" value="1-(5-phosphoribosyl)-5-[(5-phosphoribosylamino)methylideneamino]imidazole-4-carboxamide isomerase"/>
    <property type="match status" value="1"/>
</dbReference>
<dbReference type="PANTHER" id="PTHR43090">
    <property type="entry name" value="1-(5-PHOSPHORIBOSYL)-5-[(5-PHOSPHORIBOSYLAMINO)METHYLIDENEAMINO] IMIDAZOLE-4-CARBOXAMIDE ISOMERASE"/>
    <property type="match status" value="1"/>
</dbReference>
<dbReference type="PANTHER" id="PTHR43090:SF2">
    <property type="entry name" value="1-(5-PHOSPHORIBOSYL)-5-[(5-PHOSPHORIBOSYLAMINO)METHYLIDENEAMINO] IMIDAZOLE-4-CARBOXAMIDE ISOMERASE"/>
    <property type="match status" value="1"/>
</dbReference>
<dbReference type="Pfam" id="PF00977">
    <property type="entry name" value="His_biosynth"/>
    <property type="match status" value="1"/>
</dbReference>
<dbReference type="SUPFAM" id="SSF51366">
    <property type="entry name" value="Ribulose-phoshate binding barrel"/>
    <property type="match status" value="1"/>
</dbReference>